<gene>
    <name type="ordered locus">MJ0073</name>
</gene>
<name>Y073_METJA</name>
<feature type="chain" id="PRO_0000106681" description="Uncharacterized protein MJ0073">
    <location>
        <begin position="1"/>
        <end position="93"/>
    </location>
</feature>
<dbReference type="EMBL" id="L77117">
    <property type="protein sequence ID" value="AAB98055.1"/>
    <property type="molecule type" value="Genomic_DNA"/>
</dbReference>
<dbReference type="PIR" id="A64309">
    <property type="entry name" value="A64309"/>
</dbReference>
<dbReference type="SMR" id="Q60379"/>
<dbReference type="STRING" id="243232.MJ_0073"/>
<dbReference type="PaxDb" id="243232-MJ_0073"/>
<dbReference type="EnsemblBacteria" id="AAB98055">
    <property type="protein sequence ID" value="AAB98055"/>
    <property type="gene ID" value="MJ_0073"/>
</dbReference>
<dbReference type="KEGG" id="mja:MJ_0073"/>
<dbReference type="eggNOG" id="arCOG05114">
    <property type="taxonomic scope" value="Archaea"/>
</dbReference>
<dbReference type="HOGENOM" id="CLU_2392907_0_0_2"/>
<dbReference type="InParanoid" id="Q60379"/>
<dbReference type="PhylomeDB" id="Q60379"/>
<dbReference type="Proteomes" id="UP000000805">
    <property type="component" value="Chromosome"/>
</dbReference>
<dbReference type="Gene3D" id="3.40.50.1000">
    <property type="entry name" value="HAD superfamily/HAD-like"/>
    <property type="match status" value="1"/>
</dbReference>
<dbReference type="InterPro" id="IPR036412">
    <property type="entry name" value="HAD-like_sf"/>
</dbReference>
<dbReference type="InterPro" id="IPR023214">
    <property type="entry name" value="HAD_sf"/>
</dbReference>
<dbReference type="SUPFAM" id="SSF56784">
    <property type="entry name" value="HAD-like"/>
    <property type="match status" value="1"/>
</dbReference>
<reference key="1">
    <citation type="journal article" date="1996" name="Science">
        <title>Complete genome sequence of the methanogenic archaeon, Methanococcus jannaschii.</title>
        <authorList>
            <person name="Bult C.J."/>
            <person name="White O."/>
            <person name="Olsen G.J."/>
            <person name="Zhou L."/>
            <person name="Fleischmann R.D."/>
            <person name="Sutton G.G."/>
            <person name="Blake J.A."/>
            <person name="FitzGerald L.M."/>
            <person name="Clayton R.A."/>
            <person name="Gocayne J.D."/>
            <person name="Kerlavage A.R."/>
            <person name="Dougherty B.A."/>
            <person name="Tomb J.-F."/>
            <person name="Adams M.D."/>
            <person name="Reich C.I."/>
            <person name="Overbeek R."/>
            <person name="Kirkness E.F."/>
            <person name="Weinstock K.G."/>
            <person name="Merrick J.M."/>
            <person name="Glodek A."/>
            <person name="Scott J.L."/>
            <person name="Geoghagen N.S.M."/>
            <person name="Weidman J.F."/>
            <person name="Fuhrmann J.L."/>
            <person name="Nguyen D."/>
            <person name="Utterback T.R."/>
            <person name="Kelley J.M."/>
            <person name="Peterson J.D."/>
            <person name="Sadow P.W."/>
            <person name="Hanna M.C."/>
            <person name="Cotton M.D."/>
            <person name="Roberts K.M."/>
            <person name="Hurst M.A."/>
            <person name="Kaine B.P."/>
            <person name="Borodovsky M."/>
            <person name="Klenk H.-P."/>
            <person name="Fraser C.M."/>
            <person name="Smith H.O."/>
            <person name="Woese C.R."/>
            <person name="Venter J.C."/>
        </authorList>
    </citation>
    <scope>NUCLEOTIDE SEQUENCE [LARGE SCALE GENOMIC DNA]</scope>
    <source>
        <strain>ATCC 43067 / DSM 2661 / JAL-1 / JCM 10045 / NBRC 100440</strain>
    </source>
</reference>
<proteinExistence type="predicted"/>
<accession>Q60379</accession>
<protein>
    <recommendedName>
        <fullName>Uncharacterized protein MJ0073</fullName>
    </recommendedName>
</protein>
<sequence>MKVDREKYGSEKIAKLKILEELKKENPNKKIIAIGNGNNDELLLKNADLGICVIGDEGAWSKTILSSDIVVKDINDALDLLLNENRLKATSRD</sequence>
<keyword id="KW-1185">Reference proteome</keyword>
<organism>
    <name type="scientific">Methanocaldococcus jannaschii (strain ATCC 43067 / DSM 2661 / JAL-1 / JCM 10045 / NBRC 100440)</name>
    <name type="common">Methanococcus jannaschii</name>
    <dbReference type="NCBI Taxonomy" id="243232"/>
    <lineage>
        <taxon>Archaea</taxon>
        <taxon>Methanobacteriati</taxon>
        <taxon>Methanobacteriota</taxon>
        <taxon>Methanomada group</taxon>
        <taxon>Methanococci</taxon>
        <taxon>Methanococcales</taxon>
        <taxon>Methanocaldococcaceae</taxon>
        <taxon>Methanocaldococcus</taxon>
    </lineage>
</organism>